<protein>
    <recommendedName>
        <fullName evidence="1">GTPase Era</fullName>
    </recommendedName>
</protein>
<dbReference type="EMBL" id="CU928160">
    <property type="protein sequence ID" value="CAQ99515.1"/>
    <property type="molecule type" value="Genomic_DNA"/>
</dbReference>
<dbReference type="RefSeq" id="WP_000020737.1">
    <property type="nucleotide sequence ID" value="NC_011741.1"/>
</dbReference>
<dbReference type="SMR" id="B7M8H9"/>
<dbReference type="GeneID" id="93774525"/>
<dbReference type="KEGG" id="ecr:ECIAI1_2677"/>
<dbReference type="HOGENOM" id="CLU_038009_1_2_6"/>
<dbReference type="GO" id="GO:0005829">
    <property type="term" value="C:cytosol"/>
    <property type="evidence" value="ECO:0007669"/>
    <property type="project" value="TreeGrafter"/>
</dbReference>
<dbReference type="GO" id="GO:0005886">
    <property type="term" value="C:plasma membrane"/>
    <property type="evidence" value="ECO:0007669"/>
    <property type="project" value="UniProtKB-SubCell"/>
</dbReference>
<dbReference type="GO" id="GO:0005525">
    <property type="term" value="F:GTP binding"/>
    <property type="evidence" value="ECO:0007669"/>
    <property type="project" value="UniProtKB-UniRule"/>
</dbReference>
<dbReference type="GO" id="GO:0003924">
    <property type="term" value="F:GTPase activity"/>
    <property type="evidence" value="ECO:0007669"/>
    <property type="project" value="UniProtKB-UniRule"/>
</dbReference>
<dbReference type="GO" id="GO:0043024">
    <property type="term" value="F:ribosomal small subunit binding"/>
    <property type="evidence" value="ECO:0007669"/>
    <property type="project" value="TreeGrafter"/>
</dbReference>
<dbReference type="GO" id="GO:0070181">
    <property type="term" value="F:small ribosomal subunit rRNA binding"/>
    <property type="evidence" value="ECO:0007669"/>
    <property type="project" value="UniProtKB-UniRule"/>
</dbReference>
<dbReference type="GO" id="GO:0000028">
    <property type="term" value="P:ribosomal small subunit assembly"/>
    <property type="evidence" value="ECO:0007669"/>
    <property type="project" value="TreeGrafter"/>
</dbReference>
<dbReference type="CDD" id="cd04163">
    <property type="entry name" value="Era"/>
    <property type="match status" value="1"/>
</dbReference>
<dbReference type="CDD" id="cd22534">
    <property type="entry name" value="KH-II_Era"/>
    <property type="match status" value="1"/>
</dbReference>
<dbReference type="FunFam" id="3.30.300.20:FF:000003">
    <property type="entry name" value="GTPase Era"/>
    <property type="match status" value="1"/>
</dbReference>
<dbReference type="FunFam" id="3.40.50.300:FF:000094">
    <property type="entry name" value="GTPase Era"/>
    <property type="match status" value="1"/>
</dbReference>
<dbReference type="Gene3D" id="3.30.300.20">
    <property type="match status" value="1"/>
</dbReference>
<dbReference type="Gene3D" id="3.40.50.300">
    <property type="entry name" value="P-loop containing nucleotide triphosphate hydrolases"/>
    <property type="match status" value="1"/>
</dbReference>
<dbReference type="HAMAP" id="MF_00367">
    <property type="entry name" value="GTPase_Era"/>
    <property type="match status" value="1"/>
</dbReference>
<dbReference type="InterPro" id="IPR030388">
    <property type="entry name" value="G_ERA_dom"/>
</dbReference>
<dbReference type="InterPro" id="IPR006073">
    <property type="entry name" value="GTP-bd"/>
</dbReference>
<dbReference type="InterPro" id="IPR005662">
    <property type="entry name" value="GTPase_Era-like"/>
</dbReference>
<dbReference type="InterPro" id="IPR015946">
    <property type="entry name" value="KH_dom-like_a/b"/>
</dbReference>
<dbReference type="InterPro" id="IPR004044">
    <property type="entry name" value="KH_dom_type_2"/>
</dbReference>
<dbReference type="InterPro" id="IPR009019">
    <property type="entry name" value="KH_sf_prok-type"/>
</dbReference>
<dbReference type="InterPro" id="IPR027417">
    <property type="entry name" value="P-loop_NTPase"/>
</dbReference>
<dbReference type="InterPro" id="IPR005225">
    <property type="entry name" value="Small_GTP-bd"/>
</dbReference>
<dbReference type="NCBIfam" id="TIGR00436">
    <property type="entry name" value="era"/>
    <property type="match status" value="1"/>
</dbReference>
<dbReference type="NCBIfam" id="NF000908">
    <property type="entry name" value="PRK00089.1"/>
    <property type="match status" value="1"/>
</dbReference>
<dbReference type="NCBIfam" id="TIGR00231">
    <property type="entry name" value="small_GTP"/>
    <property type="match status" value="1"/>
</dbReference>
<dbReference type="PANTHER" id="PTHR42698">
    <property type="entry name" value="GTPASE ERA"/>
    <property type="match status" value="1"/>
</dbReference>
<dbReference type="PANTHER" id="PTHR42698:SF1">
    <property type="entry name" value="GTPASE ERA, MITOCHONDRIAL"/>
    <property type="match status" value="1"/>
</dbReference>
<dbReference type="Pfam" id="PF07650">
    <property type="entry name" value="KH_2"/>
    <property type="match status" value="1"/>
</dbReference>
<dbReference type="Pfam" id="PF01926">
    <property type="entry name" value="MMR_HSR1"/>
    <property type="match status" value="1"/>
</dbReference>
<dbReference type="SUPFAM" id="SSF52540">
    <property type="entry name" value="P-loop containing nucleoside triphosphate hydrolases"/>
    <property type="match status" value="1"/>
</dbReference>
<dbReference type="SUPFAM" id="SSF54814">
    <property type="entry name" value="Prokaryotic type KH domain (KH-domain type II)"/>
    <property type="match status" value="1"/>
</dbReference>
<dbReference type="PROSITE" id="PS51713">
    <property type="entry name" value="G_ERA"/>
    <property type="match status" value="1"/>
</dbReference>
<dbReference type="PROSITE" id="PS50823">
    <property type="entry name" value="KH_TYPE_2"/>
    <property type="match status" value="1"/>
</dbReference>
<comment type="function">
    <text evidence="1">An essential GTPase that binds both GDP and GTP, with rapid nucleotide exchange. Plays a role in 16S rRNA processing and 30S ribosomal subunit biogenesis and possibly also in cell cycle regulation and energy metabolism.</text>
</comment>
<comment type="subunit">
    <text evidence="1">Monomer.</text>
</comment>
<comment type="subcellular location">
    <subcellularLocation>
        <location>Cytoplasm</location>
    </subcellularLocation>
    <subcellularLocation>
        <location evidence="1">Cell inner membrane</location>
        <topology evidence="1">Peripheral membrane protein</topology>
    </subcellularLocation>
</comment>
<comment type="similarity">
    <text evidence="1 2">Belongs to the TRAFAC class TrmE-Era-EngA-EngB-Septin-like GTPase superfamily. Era GTPase family.</text>
</comment>
<name>ERA_ECO8A</name>
<organism>
    <name type="scientific">Escherichia coli O8 (strain IAI1)</name>
    <dbReference type="NCBI Taxonomy" id="585034"/>
    <lineage>
        <taxon>Bacteria</taxon>
        <taxon>Pseudomonadati</taxon>
        <taxon>Pseudomonadota</taxon>
        <taxon>Gammaproteobacteria</taxon>
        <taxon>Enterobacterales</taxon>
        <taxon>Enterobacteriaceae</taxon>
        <taxon>Escherichia</taxon>
    </lineage>
</organism>
<evidence type="ECO:0000255" key="1">
    <source>
        <dbReference type="HAMAP-Rule" id="MF_00367"/>
    </source>
</evidence>
<evidence type="ECO:0000255" key="2">
    <source>
        <dbReference type="PROSITE-ProRule" id="PRU01050"/>
    </source>
</evidence>
<keyword id="KW-0997">Cell inner membrane</keyword>
<keyword id="KW-1003">Cell membrane</keyword>
<keyword id="KW-0963">Cytoplasm</keyword>
<keyword id="KW-0342">GTP-binding</keyword>
<keyword id="KW-0472">Membrane</keyword>
<keyword id="KW-0547">Nucleotide-binding</keyword>
<keyword id="KW-0690">Ribosome biogenesis</keyword>
<keyword id="KW-0694">RNA-binding</keyword>
<keyword id="KW-0699">rRNA-binding</keyword>
<proteinExistence type="inferred from homology"/>
<accession>B7M8H9</accession>
<feature type="chain" id="PRO_1000121321" description="GTPase Era">
    <location>
        <begin position="1"/>
        <end position="301"/>
    </location>
</feature>
<feature type="domain" description="Era-type G" evidence="2">
    <location>
        <begin position="7"/>
        <end position="175"/>
    </location>
</feature>
<feature type="domain" description="KH type-2" evidence="1">
    <location>
        <begin position="206"/>
        <end position="283"/>
    </location>
</feature>
<feature type="region of interest" description="G1" evidence="2">
    <location>
        <begin position="15"/>
        <end position="22"/>
    </location>
</feature>
<feature type="region of interest" description="G2" evidence="2">
    <location>
        <begin position="41"/>
        <end position="45"/>
    </location>
</feature>
<feature type="region of interest" description="G3" evidence="2">
    <location>
        <begin position="62"/>
        <end position="65"/>
    </location>
</feature>
<feature type="region of interest" description="G4" evidence="2">
    <location>
        <begin position="124"/>
        <end position="127"/>
    </location>
</feature>
<feature type="region of interest" description="G5" evidence="2">
    <location>
        <begin position="154"/>
        <end position="156"/>
    </location>
</feature>
<feature type="binding site" evidence="1">
    <location>
        <begin position="15"/>
        <end position="22"/>
    </location>
    <ligand>
        <name>GTP</name>
        <dbReference type="ChEBI" id="CHEBI:37565"/>
    </ligand>
</feature>
<feature type="binding site" evidence="1">
    <location>
        <begin position="62"/>
        <end position="66"/>
    </location>
    <ligand>
        <name>GTP</name>
        <dbReference type="ChEBI" id="CHEBI:37565"/>
    </ligand>
</feature>
<feature type="binding site" evidence="1">
    <location>
        <begin position="124"/>
        <end position="127"/>
    </location>
    <ligand>
        <name>GTP</name>
        <dbReference type="ChEBI" id="CHEBI:37565"/>
    </ligand>
</feature>
<reference key="1">
    <citation type="journal article" date="2009" name="PLoS Genet.">
        <title>Organised genome dynamics in the Escherichia coli species results in highly diverse adaptive paths.</title>
        <authorList>
            <person name="Touchon M."/>
            <person name="Hoede C."/>
            <person name="Tenaillon O."/>
            <person name="Barbe V."/>
            <person name="Baeriswyl S."/>
            <person name="Bidet P."/>
            <person name="Bingen E."/>
            <person name="Bonacorsi S."/>
            <person name="Bouchier C."/>
            <person name="Bouvet O."/>
            <person name="Calteau A."/>
            <person name="Chiapello H."/>
            <person name="Clermont O."/>
            <person name="Cruveiller S."/>
            <person name="Danchin A."/>
            <person name="Diard M."/>
            <person name="Dossat C."/>
            <person name="Karoui M.E."/>
            <person name="Frapy E."/>
            <person name="Garry L."/>
            <person name="Ghigo J.M."/>
            <person name="Gilles A.M."/>
            <person name="Johnson J."/>
            <person name="Le Bouguenec C."/>
            <person name="Lescat M."/>
            <person name="Mangenot S."/>
            <person name="Martinez-Jehanne V."/>
            <person name="Matic I."/>
            <person name="Nassif X."/>
            <person name="Oztas S."/>
            <person name="Petit M.A."/>
            <person name="Pichon C."/>
            <person name="Rouy Z."/>
            <person name="Ruf C.S."/>
            <person name="Schneider D."/>
            <person name="Tourret J."/>
            <person name="Vacherie B."/>
            <person name="Vallenet D."/>
            <person name="Medigue C."/>
            <person name="Rocha E.P.C."/>
            <person name="Denamur E."/>
        </authorList>
    </citation>
    <scope>NUCLEOTIDE SEQUENCE [LARGE SCALE GENOMIC DNA]</scope>
    <source>
        <strain>IAI1</strain>
    </source>
</reference>
<gene>
    <name evidence="1" type="primary">era</name>
    <name type="ordered locus">ECIAI1_2677</name>
</gene>
<sequence>MSIDKSYCGFIAIVGRPNVGKSTLLNKLLGQKISITSRKAQTTRHRIVGIHTEGAYQAIYVDTPGLHMEEKRAINRLMNKAASSSIGDVELVIFVVEGTRWTPDDEMVLNKLRDGKAPVILAVNKVDNVQEKADLLPHLQFLASQMNFLDIVPISAETGLNVDTIAAIVRKHLPEATHHFPEDYITDRSQRFMASEIIREKLMRFLGAELPYSVTVEIERFVSNERGGYDINGLILVEREGQKKMVIGNKGAKIKTIGIEARKDMQEMFEAPVHLELWVKVKSGWADDERALRSLGYVDDL</sequence>